<protein>
    <recommendedName>
        <fullName evidence="1">Photosystem II CP47 reaction center protein</fullName>
    </recommendedName>
    <alternativeName>
        <fullName evidence="1">PSII 47 kDa protein</fullName>
    </alternativeName>
    <alternativeName>
        <fullName evidence="1">Protein CP-47</fullName>
    </alternativeName>
</protein>
<keyword id="KW-0148">Chlorophyll</keyword>
<keyword id="KW-0150">Chloroplast</keyword>
<keyword id="KW-0157">Chromophore</keyword>
<keyword id="KW-0472">Membrane</keyword>
<keyword id="KW-0602">Photosynthesis</keyword>
<keyword id="KW-0604">Photosystem II</keyword>
<keyword id="KW-0934">Plastid</keyword>
<keyword id="KW-0793">Thylakoid</keyword>
<keyword id="KW-0812">Transmembrane</keyword>
<keyword id="KW-1133">Transmembrane helix</keyword>
<name>PSBB_GOSBA</name>
<dbReference type="EMBL" id="AP009123">
    <property type="protein sequence ID" value="BAF41273.1"/>
    <property type="molecule type" value="Genomic_DNA"/>
</dbReference>
<dbReference type="RefSeq" id="YP_913213.1">
    <property type="nucleotide sequence ID" value="NC_008641.1"/>
</dbReference>
<dbReference type="SMR" id="A0ZZ61"/>
<dbReference type="GeneID" id="4575217"/>
<dbReference type="GO" id="GO:0009535">
    <property type="term" value="C:chloroplast thylakoid membrane"/>
    <property type="evidence" value="ECO:0007669"/>
    <property type="project" value="UniProtKB-SubCell"/>
</dbReference>
<dbReference type="GO" id="GO:0009523">
    <property type="term" value="C:photosystem II"/>
    <property type="evidence" value="ECO:0007669"/>
    <property type="project" value="UniProtKB-KW"/>
</dbReference>
<dbReference type="GO" id="GO:0016168">
    <property type="term" value="F:chlorophyll binding"/>
    <property type="evidence" value="ECO:0007669"/>
    <property type="project" value="UniProtKB-UniRule"/>
</dbReference>
<dbReference type="GO" id="GO:0045156">
    <property type="term" value="F:electron transporter, transferring electrons within the cyclic electron transport pathway of photosynthesis activity"/>
    <property type="evidence" value="ECO:0007669"/>
    <property type="project" value="InterPro"/>
</dbReference>
<dbReference type="GO" id="GO:0009772">
    <property type="term" value="P:photosynthetic electron transport in photosystem II"/>
    <property type="evidence" value="ECO:0007669"/>
    <property type="project" value="InterPro"/>
</dbReference>
<dbReference type="FunFam" id="3.10.680.10:FF:000001">
    <property type="entry name" value="Photosystem II CP47 reaction center protein"/>
    <property type="match status" value="1"/>
</dbReference>
<dbReference type="Gene3D" id="3.10.680.10">
    <property type="entry name" value="Photosystem II CP47 reaction center protein"/>
    <property type="match status" value="1"/>
</dbReference>
<dbReference type="HAMAP" id="MF_01495">
    <property type="entry name" value="PSII_PsbB_CP47"/>
    <property type="match status" value="1"/>
</dbReference>
<dbReference type="InterPro" id="IPR000932">
    <property type="entry name" value="PS_antenna-like"/>
</dbReference>
<dbReference type="InterPro" id="IPR036001">
    <property type="entry name" value="PS_II_antenna-like_sf"/>
</dbReference>
<dbReference type="InterPro" id="IPR017486">
    <property type="entry name" value="PSII_PsbB"/>
</dbReference>
<dbReference type="NCBIfam" id="TIGR03039">
    <property type="entry name" value="PS_II_CP47"/>
    <property type="match status" value="1"/>
</dbReference>
<dbReference type="PANTHER" id="PTHR33180">
    <property type="entry name" value="PHOTOSYSTEM II CP43 REACTION CENTER PROTEIN"/>
    <property type="match status" value="1"/>
</dbReference>
<dbReference type="PANTHER" id="PTHR33180:SF35">
    <property type="entry name" value="PHOTOSYSTEM II CP47 REACTION CENTER PROTEIN"/>
    <property type="match status" value="1"/>
</dbReference>
<dbReference type="Pfam" id="PF00421">
    <property type="entry name" value="PSII"/>
    <property type="match status" value="1"/>
</dbReference>
<dbReference type="SUPFAM" id="SSF161077">
    <property type="entry name" value="Photosystem II antenna protein-like"/>
    <property type="match status" value="1"/>
</dbReference>
<evidence type="ECO:0000255" key="1">
    <source>
        <dbReference type="HAMAP-Rule" id="MF_01495"/>
    </source>
</evidence>
<proteinExistence type="inferred from homology"/>
<reference key="1">
    <citation type="journal article" date="2006" name="Genes Genet. Syst.">
        <title>Complete nucleotide sequence of the cotton (Gossypium barbadense L.) chloroplast genome with a comparative analysis of sequences among 9 dicot plants.</title>
        <authorList>
            <person name="Ibrahim R.I.H."/>
            <person name="Azuma J."/>
            <person name="Sakamoto M."/>
        </authorList>
    </citation>
    <scope>NUCLEOTIDE SEQUENCE [LARGE SCALE GENOMIC DNA]</scope>
</reference>
<sequence length="508" mass="56039">MGLPWYRVHTVVLNDPGRLLSVHIMHTALVAGWAGSMALYELAVFDPSDPVLDPMWRQGMFVIPFMTRLGITNSWGGWSITGGTITNPGIWSYEGVAGAHIVFSGLCFLAAIWHWVYWDLEIFCDERTGKPSLDLPKIFGIHLFLSGVACFGFGAFHVTGLYGPGIWVSDPCGLTGKVQPVNPAWGVEGFDPFVPGGIASHHIAAGTLGILAGLFHLSVRPPQRLYKGLRMGNIETVLSSSIAAVFFAAFVVAGTMWYGSATTPIELFGPTRYQWDQGYFQQEIYRRVSAGLAENQSLSEAWSKIPEKLAFYDYIGNNPAKGGLFRAGSMDNGDGIAVGWLGHPIFRDKDGRELFVRRMPTFFETFPVVLVDGDGIVRADVPFRRAESKYSVEQVGVTVEFYGGELNGVSYSDPATVKKYARRAQLGEIFELDRATLKSDGVFRSSPRGWFTFGHASFALLFFFGHIWHGARTLFRDVFAGIDPDLDAQVEFGAFQKLGDPTTRRQVV</sequence>
<geneLocation type="chloroplast"/>
<accession>A0ZZ61</accession>
<comment type="function">
    <text evidence="1">One of the components of the core complex of photosystem II (PSII). It binds chlorophyll and helps catalyze the primary light-induced photochemical processes of PSII. PSII is a light-driven water:plastoquinone oxidoreductase, using light energy to abstract electrons from H(2)O, generating O(2) and a proton gradient subsequently used for ATP formation.</text>
</comment>
<comment type="cofactor">
    <text evidence="1">Binds multiple chlorophylls. PSII binds additional chlorophylls, carotenoids and specific lipids.</text>
</comment>
<comment type="subunit">
    <text evidence="1">PSII is composed of 1 copy each of membrane proteins PsbA, PsbB, PsbC, PsbD, PsbE, PsbF, PsbH, PsbI, PsbJ, PsbK, PsbL, PsbM, PsbT, PsbX, PsbY, PsbZ, Psb30/Ycf12, at least 3 peripheral proteins of the oxygen-evolving complex and a large number of cofactors. It forms dimeric complexes.</text>
</comment>
<comment type="subcellular location">
    <subcellularLocation>
        <location evidence="1">Plastid</location>
        <location evidence="1">Chloroplast thylakoid membrane</location>
        <topology evidence="1">Multi-pass membrane protein</topology>
    </subcellularLocation>
</comment>
<comment type="similarity">
    <text evidence="1">Belongs to the PsbB/PsbC family. PsbB subfamily.</text>
</comment>
<gene>
    <name evidence="1" type="primary">psbB</name>
</gene>
<feature type="chain" id="PRO_0000359825" description="Photosystem II CP47 reaction center protein">
    <location>
        <begin position="1"/>
        <end position="508"/>
    </location>
</feature>
<feature type="transmembrane region" description="Helical" evidence="1">
    <location>
        <begin position="21"/>
        <end position="36"/>
    </location>
</feature>
<feature type="transmembrane region" description="Helical" evidence="1">
    <location>
        <begin position="101"/>
        <end position="115"/>
    </location>
</feature>
<feature type="transmembrane region" description="Helical" evidence="1">
    <location>
        <begin position="140"/>
        <end position="156"/>
    </location>
</feature>
<feature type="transmembrane region" description="Helical" evidence="1">
    <location>
        <begin position="203"/>
        <end position="218"/>
    </location>
</feature>
<feature type="transmembrane region" description="Helical" evidence="1">
    <location>
        <begin position="237"/>
        <end position="252"/>
    </location>
</feature>
<feature type="transmembrane region" description="Helical" evidence="1">
    <location>
        <begin position="457"/>
        <end position="472"/>
    </location>
</feature>
<organism>
    <name type="scientific">Gossypium barbadense</name>
    <name type="common">Sea Island cotton</name>
    <name type="synonym">Hibiscus barbadensis</name>
    <dbReference type="NCBI Taxonomy" id="3634"/>
    <lineage>
        <taxon>Eukaryota</taxon>
        <taxon>Viridiplantae</taxon>
        <taxon>Streptophyta</taxon>
        <taxon>Embryophyta</taxon>
        <taxon>Tracheophyta</taxon>
        <taxon>Spermatophyta</taxon>
        <taxon>Magnoliopsida</taxon>
        <taxon>eudicotyledons</taxon>
        <taxon>Gunneridae</taxon>
        <taxon>Pentapetalae</taxon>
        <taxon>rosids</taxon>
        <taxon>malvids</taxon>
        <taxon>Malvales</taxon>
        <taxon>Malvaceae</taxon>
        <taxon>Malvoideae</taxon>
        <taxon>Gossypium</taxon>
    </lineage>
</organism>